<proteinExistence type="evidence at protein level"/>
<reference key="1">
    <citation type="journal article" date="1995" name="J. Cell Sci.">
        <title>A novel essential fission yeast gene pad1+ positively regulates pap1(+)-dependent transcription and is implicated in the maintenance of chromosome structure.</title>
        <authorList>
            <person name="Shimanuki M."/>
            <person name="Saka Y."/>
            <person name="Yanagida M."/>
            <person name="Toda T."/>
        </authorList>
    </citation>
    <scope>NUCLEOTIDE SEQUENCE [GENOMIC DNA]</scope>
</reference>
<reference key="2">
    <citation type="journal article" date="1995" name="Gene">
        <title>A K-252a-resistance gene, sks1+, encodes a protein similar to the Caenorhabditis elegans F37 A4.5 gene product and confers multidrug resistance in Schizosaccharomyces pombe.</title>
        <authorList>
            <person name="Usui T."/>
            <person name="Yoshida M."/>
            <person name="Honda A."/>
            <person name="Beppu T."/>
            <person name="Horinouchi S."/>
        </authorList>
    </citation>
    <scope>NUCLEOTIDE SEQUENCE [GENOMIC DNA]</scope>
</reference>
<reference key="3">
    <citation type="submission" date="1996-08" db="EMBL/GenBank/DDBJ databases">
        <title>The nucleotide sequence of a 9.1 kb DNA fragment of Schizosaccharomyces pombe chromosome reveals the presence of pad1+/sks1+ gene and three previously unknown open reading frames.</title>
        <authorList>
            <person name="Nagao K."/>
            <person name="Arioka M."/>
            <person name="Kadokura H."/>
            <person name="Yoda K."/>
            <person name="Yamasaki M."/>
        </authorList>
    </citation>
    <scope>NUCLEOTIDE SEQUENCE [GENOMIC DNA]</scope>
</reference>
<reference key="4">
    <citation type="journal article" date="2002" name="Nature">
        <title>The genome sequence of Schizosaccharomyces pombe.</title>
        <authorList>
            <person name="Wood V."/>
            <person name="Gwilliam R."/>
            <person name="Rajandream M.A."/>
            <person name="Lyne M.H."/>
            <person name="Lyne R."/>
            <person name="Stewart A."/>
            <person name="Sgouros J.G."/>
            <person name="Peat N."/>
            <person name="Hayles J."/>
            <person name="Baker S.G."/>
            <person name="Basham D."/>
            <person name="Bowman S."/>
            <person name="Brooks K."/>
            <person name="Brown D."/>
            <person name="Brown S."/>
            <person name="Chillingworth T."/>
            <person name="Churcher C.M."/>
            <person name="Collins M."/>
            <person name="Connor R."/>
            <person name="Cronin A."/>
            <person name="Davis P."/>
            <person name="Feltwell T."/>
            <person name="Fraser A."/>
            <person name="Gentles S."/>
            <person name="Goble A."/>
            <person name="Hamlin N."/>
            <person name="Harris D.E."/>
            <person name="Hidalgo J."/>
            <person name="Hodgson G."/>
            <person name="Holroyd S."/>
            <person name="Hornsby T."/>
            <person name="Howarth S."/>
            <person name="Huckle E.J."/>
            <person name="Hunt S."/>
            <person name="Jagels K."/>
            <person name="James K.D."/>
            <person name="Jones L."/>
            <person name="Jones M."/>
            <person name="Leather S."/>
            <person name="McDonald S."/>
            <person name="McLean J."/>
            <person name="Mooney P."/>
            <person name="Moule S."/>
            <person name="Mungall K.L."/>
            <person name="Murphy L.D."/>
            <person name="Niblett D."/>
            <person name="Odell C."/>
            <person name="Oliver K."/>
            <person name="O'Neil S."/>
            <person name="Pearson D."/>
            <person name="Quail M.A."/>
            <person name="Rabbinowitsch E."/>
            <person name="Rutherford K.M."/>
            <person name="Rutter S."/>
            <person name="Saunders D."/>
            <person name="Seeger K."/>
            <person name="Sharp S."/>
            <person name="Skelton J."/>
            <person name="Simmonds M.N."/>
            <person name="Squares R."/>
            <person name="Squares S."/>
            <person name="Stevens K."/>
            <person name="Taylor K."/>
            <person name="Taylor R.G."/>
            <person name="Tivey A."/>
            <person name="Walsh S.V."/>
            <person name="Warren T."/>
            <person name="Whitehead S."/>
            <person name="Woodward J.R."/>
            <person name="Volckaert G."/>
            <person name="Aert R."/>
            <person name="Robben J."/>
            <person name="Grymonprez B."/>
            <person name="Weltjens I."/>
            <person name="Vanstreels E."/>
            <person name="Rieger M."/>
            <person name="Schaefer M."/>
            <person name="Mueller-Auer S."/>
            <person name="Gabel C."/>
            <person name="Fuchs M."/>
            <person name="Duesterhoeft A."/>
            <person name="Fritzc C."/>
            <person name="Holzer E."/>
            <person name="Moestl D."/>
            <person name="Hilbert H."/>
            <person name="Borzym K."/>
            <person name="Langer I."/>
            <person name="Beck A."/>
            <person name="Lehrach H."/>
            <person name="Reinhardt R."/>
            <person name="Pohl T.M."/>
            <person name="Eger P."/>
            <person name="Zimmermann W."/>
            <person name="Wedler H."/>
            <person name="Wambutt R."/>
            <person name="Purnelle B."/>
            <person name="Goffeau A."/>
            <person name="Cadieu E."/>
            <person name="Dreano S."/>
            <person name="Gloux S."/>
            <person name="Lelaure V."/>
            <person name="Mottier S."/>
            <person name="Galibert F."/>
            <person name="Aves S.J."/>
            <person name="Xiang Z."/>
            <person name="Hunt C."/>
            <person name="Moore K."/>
            <person name="Hurst S.M."/>
            <person name="Lucas M."/>
            <person name="Rochet M."/>
            <person name="Gaillardin C."/>
            <person name="Tallada V.A."/>
            <person name="Garzon A."/>
            <person name="Thode G."/>
            <person name="Daga R.R."/>
            <person name="Cruzado L."/>
            <person name="Jimenez J."/>
            <person name="Sanchez M."/>
            <person name="del Rey F."/>
            <person name="Benito J."/>
            <person name="Dominguez A."/>
            <person name="Revuelta J.L."/>
            <person name="Moreno S."/>
            <person name="Armstrong J."/>
            <person name="Forsburg S.L."/>
            <person name="Cerutti L."/>
            <person name="Lowe T."/>
            <person name="McCombie W.R."/>
            <person name="Paulsen I."/>
            <person name="Potashkin J."/>
            <person name="Shpakovski G.V."/>
            <person name="Ussery D."/>
            <person name="Barrell B.G."/>
            <person name="Nurse P."/>
        </authorList>
    </citation>
    <scope>NUCLEOTIDE SEQUENCE [LARGE SCALE GENOMIC DNA]</scope>
    <source>
        <strain>972 / ATCC 24843</strain>
    </source>
</reference>
<reference key="5">
    <citation type="journal article" date="1998" name="J. Biol. Chem.">
        <title>The pad1+ gene encodes a subunit of the 26 S proteasome in fission yeast.</title>
        <authorList>
            <person name="Penney M."/>
            <person name="Wilkinson C."/>
            <person name="Wallace M."/>
            <person name="Javerzat J.-P."/>
            <person name="Ferrell K."/>
            <person name="Seeger M."/>
            <person name="Dubiel W."/>
            <person name="McKay S."/>
            <person name="Allshire R."/>
            <person name="Gordon C."/>
        </authorList>
    </citation>
    <scope>IDENTIFICATION AS A 26S PROTEASOME SUBUNIT</scope>
    <scope>FUNCTION</scope>
</reference>
<organism>
    <name type="scientific">Schizosaccharomyces pombe (strain 972 / ATCC 24843)</name>
    <name type="common">Fission yeast</name>
    <dbReference type="NCBI Taxonomy" id="284812"/>
    <lineage>
        <taxon>Eukaryota</taxon>
        <taxon>Fungi</taxon>
        <taxon>Dikarya</taxon>
        <taxon>Ascomycota</taxon>
        <taxon>Taphrinomycotina</taxon>
        <taxon>Schizosaccharomycetes</taxon>
        <taxon>Schizosaccharomycetales</taxon>
        <taxon>Schizosaccharomycetaceae</taxon>
        <taxon>Schizosaccharomyces</taxon>
    </lineage>
</organism>
<evidence type="ECO:0000250" key="1"/>
<evidence type="ECO:0000255" key="2">
    <source>
        <dbReference type="PROSITE-ProRule" id="PRU01182"/>
    </source>
</evidence>
<evidence type="ECO:0000269" key="3">
    <source>
    </source>
</evidence>
<evidence type="ECO:0000305" key="4"/>
<gene>
    <name type="primary">rpn11</name>
    <name type="synonym">bfr2</name>
    <name type="synonym">pad1</name>
    <name type="synonym">sks1</name>
    <name type="ORF">SPAC31G5.13</name>
</gene>
<sequence length="308" mass="34572">MESLQRLLQGARMGTGMMGDQPLVDNSECVYISSLALLKMLRHGRHGTPMEVMGLMLGEFVDDFTVRVVDVFAMPQSGTGVSVEAVDPVFQKNMMDMLKQTGRPEMVVGWYHSHPGFGCWLSSVDINTQQSFEQLTPRAVAVVVDPIQSVKGKVVIDAFRLINPSTLMMGQEPRQTTSNLGHINKPSIQALIHGLGRHYYSLRINYKKTELEEIMLLNLHKQPWAHGLLLENFNSAAEKNHASIDKMKSLSEQYTERVQNEVTLSPEQLRIQYVGKQDPKKHLDAEVQKCIDNNISSMLACMLDSVAF</sequence>
<keyword id="KW-0378">Hydrolase</keyword>
<keyword id="KW-0479">Metal-binding</keyword>
<keyword id="KW-0482">Metalloprotease</keyword>
<keyword id="KW-0645">Protease</keyword>
<keyword id="KW-0647">Proteasome</keyword>
<keyword id="KW-1185">Reference proteome</keyword>
<keyword id="KW-0862">Zinc</keyword>
<protein>
    <recommendedName>
        <fullName>26S proteasome regulatory subunit rpn11</fullName>
    </recommendedName>
    <alternativeName>
        <fullName>Protein pad1</fullName>
    </alternativeName>
</protein>
<dbReference type="EMBL" id="D31731">
    <property type="protein sequence ID" value="BAA06529.1"/>
    <property type="molecule type" value="Genomic_DNA"/>
</dbReference>
<dbReference type="EMBL" id="D45047">
    <property type="protein sequence ID" value="BAA08087.1"/>
    <property type="molecule type" value="Genomic_DNA"/>
</dbReference>
<dbReference type="EMBL" id="D84656">
    <property type="protein sequence ID" value="BAA12708.1"/>
    <property type="molecule type" value="Genomic_DNA"/>
</dbReference>
<dbReference type="EMBL" id="CU329670">
    <property type="protein sequence ID" value="CAB11697.1"/>
    <property type="molecule type" value="Genomic_DNA"/>
</dbReference>
<dbReference type="PIR" id="T43293">
    <property type="entry name" value="T43293"/>
</dbReference>
<dbReference type="PIR" id="T44427">
    <property type="entry name" value="T44427"/>
</dbReference>
<dbReference type="RefSeq" id="NP_594014.1">
    <property type="nucleotide sequence ID" value="NM_001019440.2"/>
</dbReference>
<dbReference type="SMR" id="P41878"/>
<dbReference type="BioGRID" id="279475">
    <property type="interactions" value="52"/>
</dbReference>
<dbReference type="ComplexPortal" id="CPX-9077">
    <property type="entry name" value="26S proteasome complex"/>
</dbReference>
<dbReference type="FunCoup" id="P41878">
    <property type="interactions" value="752"/>
</dbReference>
<dbReference type="IntAct" id="P41878">
    <property type="interactions" value="1"/>
</dbReference>
<dbReference type="STRING" id="284812.P41878"/>
<dbReference type="MEROPS" id="M67.A10"/>
<dbReference type="iPTMnet" id="P41878"/>
<dbReference type="PaxDb" id="4896-SPAC31G5.13.1"/>
<dbReference type="EnsemblFungi" id="SPAC31G5.13.1">
    <property type="protein sequence ID" value="SPAC31G5.13.1:pep"/>
    <property type="gene ID" value="SPAC31G5.13"/>
</dbReference>
<dbReference type="GeneID" id="2543040"/>
<dbReference type="KEGG" id="spo:2543040"/>
<dbReference type="PomBase" id="SPAC31G5.13">
    <property type="gene designation" value="rpn11"/>
</dbReference>
<dbReference type="VEuPathDB" id="FungiDB:SPAC31G5.13"/>
<dbReference type="eggNOG" id="KOG1555">
    <property type="taxonomic scope" value="Eukaryota"/>
</dbReference>
<dbReference type="HOGENOM" id="CLU_052991_0_1_1"/>
<dbReference type="InParanoid" id="P41878"/>
<dbReference type="OMA" id="KTGRHEM"/>
<dbReference type="PhylomeDB" id="P41878"/>
<dbReference type="Reactome" id="R-SPO-1236978">
    <property type="pathway name" value="Cross-presentation of soluble exogenous antigens (endosomes)"/>
</dbReference>
<dbReference type="Reactome" id="R-SPO-350562">
    <property type="pathway name" value="Regulation of ornithine decarboxylase (ODC)"/>
</dbReference>
<dbReference type="Reactome" id="R-SPO-5687128">
    <property type="pathway name" value="MAPK6/MAPK4 signaling"/>
</dbReference>
<dbReference type="Reactome" id="R-SPO-5689603">
    <property type="pathway name" value="UCH proteinases"/>
</dbReference>
<dbReference type="Reactome" id="R-SPO-5689880">
    <property type="pathway name" value="Ub-specific processing proteases"/>
</dbReference>
<dbReference type="Reactome" id="R-SPO-5689901">
    <property type="pathway name" value="Metalloprotease DUBs"/>
</dbReference>
<dbReference type="Reactome" id="R-SPO-6798695">
    <property type="pathway name" value="Neutrophil degranulation"/>
</dbReference>
<dbReference type="Reactome" id="R-SPO-68949">
    <property type="pathway name" value="Orc1 removal from chromatin"/>
</dbReference>
<dbReference type="Reactome" id="R-SPO-69017">
    <property type="pathway name" value="CDK-mediated phosphorylation and removal of Cdc6"/>
</dbReference>
<dbReference type="Reactome" id="R-SPO-69601">
    <property type="pathway name" value="Ubiquitin Mediated Degradation of Phosphorylated Cdc25A"/>
</dbReference>
<dbReference type="Reactome" id="R-SPO-75815">
    <property type="pathway name" value="Ubiquitin-dependent degradation of Cyclin D"/>
</dbReference>
<dbReference type="Reactome" id="R-SPO-8854050">
    <property type="pathway name" value="FBXL7 down-regulates AURKA during mitotic entry and in early mitosis"/>
</dbReference>
<dbReference type="Reactome" id="R-SPO-8948751">
    <property type="pathway name" value="Regulation of PTEN stability and activity"/>
</dbReference>
<dbReference type="Reactome" id="R-SPO-8951664">
    <property type="pathway name" value="Neddylation"/>
</dbReference>
<dbReference type="Reactome" id="R-SPO-9755511">
    <property type="pathway name" value="KEAP1-NFE2L2 pathway"/>
</dbReference>
<dbReference type="Reactome" id="R-SPO-983168">
    <property type="pathway name" value="Antigen processing: Ubiquitination &amp; Proteasome degradation"/>
</dbReference>
<dbReference type="Reactome" id="R-SPO-9907900">
    <property type="pathway name" value="Proteasome assembly"/>
</dbReference>
<dbReference type="PRO" id="PR:P41878"/>
<dbReference type="Proteomes" id="UP000002485">
    <property type="component" value="Chromosome I"/>
</dbReference>
<dbReference type="GO" id="GO:0005737">
    <property type="term" value="C:cytoplasm"/>
    <property type="evidence" value="ECO:0000314"/>
    <property type="project" value="PomBase"/>
</dbReference>
<dbReference type="GO" id="GO:0034399">
    <property type="term" value="C:nuclear periphery"/>
    <property type="evidence" value="ECO:0000314"/>
    <property type="project" value="PomBase"/>
</dbReference>
<dbReference type="GO" id="GO:0005634">
    <property type="term" value="C:nucleus"/>
    <property type="evidence" value="ECO:0000314"/>
    <property type="project" value="PomBase"/>
</dbReference>
<dbReference type="GO" id="GO:0000502">
    <property type="term" value="C:proteasome complex"/>
    <property type="evidence" value="ECO:0000314"/>
    <property type="project" value="PomBase"/>
</dbReference>
<dbReference type="GO" id="GO:0008541">
    <property type="term" value="C:proteasome regulatory particle, lid subcomplex"/>
    <property type="evidence" value="ECO:0000314"/>
    <property type="project" value="PomBase"/>
</dbReference>
<dbReference type="GO" id="GO:0034515">
    <property type="term" value="C:proteasome storage granule"/>
    <property type="evidence" value="ECO:0000314"/>
    <property type="project" value="PomBase"/>
</dbReference>
<dbReference type="GO" id="GO:0046872">
    <property type="term" value="F:metal ion binding"/>
    <property type="evidence" value="ECO:0007669"/>
    <property type="project" value="UniProtKB-KW"/>
</dbReference>
<dbReference type="GO" id="GO:0140492">
    <property type="term" value="F:metal-dependent deubiquitinase activity"/>
    <property type="evidence" value="ECO:0007005"/>
    <property type="project" value="PomBase"/>
</dbReference>
<dbReference type="GO" id="GO:0070628">
    <property type="term" value="F:proteasome binding"/>
    <property type="evidence" value="ECO:0000318"/>
    <property type="project" value="GO_Central"/>
</dbReference>
<dbReference type="GO" id="GO:0043161">
    <property type="term" value="P:proteasome-mediated ubiquitin-dependent protein catabolic process"/>
    <property type="evidence" value="ECO:0000315"/>
    <property type="project" value="PomBase"/>
</dbReference>
<dbReference type="CDD" id="cd08069">
    <property type="entry name" value="MPN_RPN11_CSN5"/>
    <property type="match status" value="1"/>
</dbReference>
<dbReference type="FunFam" id="3.40.140.10:FF:000001">
    <property type="entry name" value="26S proteasome non-ATPase regulatory subunit"/>
    <property type="match status" value="1"/>
</dbReference>
<dbReference type="Gene3D" id="3.40.140.10">
    <property type="entry name" value="Cytidine Deaminase, domain 2"/>
    <property type="match status" value="1"/>
</dbReference>
<dbReference type="InterPro" id="IPR000555">
    <property type="entry name" value="JAMM/MPN+_dom"/>
</dbReference>
<dbReference type="InterPro" id="IPR050242">
    <property type="entry name" value="JAMM_MPN+_peptidase_M67A"/>
</dbReference>
<dbReference type="InterPro" id="IPR037518">
    <property type="entry name" value="MPN"/>
</dbReference>
<dbReference type="InterPro" id="IPR056263">
    <property type="entry name" value="RPN11_C"/>
</dbReference>
<dbReference type="PANTHER" id="PTHR10410">
    <property type="entry name" value="EUKARYOTIC TRANSLATION INITIATION FACTOR 3 -RELATED"/>
    <property type="match status" value="1"/>
</dbReference>
<dbReference type="Pfam" id="PF01398">
    <property type="entry name" value="JAB"/>
    <property type="match status" value="1"/>
</dbReference>
<dbReference type="Pfam" id="PF23594">
    <property type="entry name" value="RPN11_C"/>
    <property type="match status" value="1"/>
</dbReference>
<dbReference type="SMART" id="SM00232">
    <property type="entry name" value="JAB_MPN"/>
    <property type="match status" value="1"/>
</dbReference>
<dbReference type="SUPFAM" id="SSF102712">
    <property type="entry name" value="JAB1/MPN domain"/>
    <property type="match status" value="1"/>
</dbReference>
<dbReference type="PROSITE" id="PS50249">
    <property type="entry name" value="MPN"/>
    <property type="match status" value="1"/>
</dbReference>
<feature type="chain" id="PRO_0000213959" description="26S proteasome regulatory subunit rpn11">
    <location>
        <begin position="1"/>
        <end position="308"/>
    </location>
</feature>
<feature type="domain" description="MPN" evidence="2">
    <location>
        <begin position="30"/>
        <end position="165"/>
    </location>
</feature>
<feature type="short sequence motif" description="JAMM motif" evidence="2">
    <location>
        <begin position="112"/>
        <end position="125"/>
    </location>
</feature>
<feature type="binding site" evidence="2">
    <location>
        <position position="112"/>
    </location>
    <ligand>
        <name>Zn(2+)</name>
        <dbReference type="ChEBI" id="CHEBI:29105"/>
        <note>catalytic</note>
    </ligand>
</feature>
<feature type="binding site" evidence="2">
    <location>
        <position position="114"/>
    </location>
    <ligand>
        <name>Zn(2+)</name>
        <dbReference type="ChEBI" id="CHEBI:29105"/>
        <note>catalytic</note>
    </ligand>
</feature>
<feature type="binding site" evidence="2">
    <location>
        <position position="125"/>
    </location>
    <ligand>
        <name>Zn(2+)</name>
        <dbReference type="ChEBI" id="CHEBI:29105"/>
        <note>catalytic</note>
    </ligand>
</feature>
<feature type="sequence conflict" description="In Ref. 2; BAA06529." evidence="4" ref="2">
    <original>H</original>
    <variation>N</variation>
    <location>
        <position position="112"/>
    </location>
</feature>
<comment type="function">
    <text evidence="3">Acts as a regulatory subunit of the 26 proteasome which is involved in the ATP-dependent degradation of ubiquitinated proteins.</text>
</comment>
<comment type="function">
    <text evidence="3">Transcription factor pap1 is controlled by the functional interaction between the positive regulator pad1 and negative regulator crm1. Both these proteins are also essential for cell viability and for the maintenance of chromosome structure. Pad1 is also responsible for resistance to staurosporine, and other drugs such as cycloheximide and caffeine.</text>
</comment>
<comment type="subunit">
    <text evidence="1">The 26S proteasome is composed of a core protease, known as the 20S proteasome, capped at one or both ends by the 19S regulatory complex (RC). The RC is composed of at least 18 different subunits in two subcomplexes, the base and the lid, which form the portions proximal and distal to the 20S proteolytic core, respectively (By similarity).</text>
</comment>
<comment type="similarity">
    <text evidence="4">Belongs to the peptidase M67A family.</text>
</comment>
<accession>P41878</accession>
<accession>Q10278</accession>
<name>RPN11_SCHPO</name>